<keyword id="KW-0067">ATP-binding</keyword>
<keyword id="KW-0418">Kinase</keyword>
<keyword id="KW-0547">Nucleotide-binding</keyword>
<keyword id="KW-0597">Phosphoprotein</keyword>
<keyword id="KW-0723">Serine/threonine-protein kinase</keyword>
<keyword id="KW-0808">Transferase</keyword>
<gene>
    <name type="primary">afsK</name>
</gene>
<sequence length="807" mass="85232">MVEQLTQHDPRRIGPFEVLGRLGAGGMGLVYLARSASGRRVAIKTVRTELAEDQLFRVRFTREVEAARAVSGFYTAAVVDADPRAAVPWLATAYVPAPSLEEIVNECGPMPTQAVRWLAAGIAQALQSIHGAGLVHRDLKPSNVLVVEDGPRVIDFGIASGVSNTRLTMTNVAVGTPAYMSPEQARDSRSVTGASDIFSLGSTLVFAATGHAPFHGANPVETVFMLVREGPDLEGLPDDLRPLIESCMQMDATHPAAEPRDLQAQLAPHLFASGSDDSGTASAWLPVPATAMIERRRGGRRTARRPPRPRPRRLRAAPQGPGAGHRLAQRGRPAFALPAVLALAAVRRVRTAAGPSAAPDGGPVQLPGAKVPIGPGRRAGEGRGAAAAAPRRRDRLGPAARRSERFLGGHGPHRTVPASTLRPGTPSPAPDRWRPWRFRMSNDVWGTPVVSGDLLYVTSFEVHALDVGNGRRQFKTRDVAWAMAVEGGRIHASDGPSLYALDAASGAEQWRLATDAWVYALKADRGTVLTATRGGGVQGWEASNGEKLWEVTGAQSDFETAEAGPVIHDGTVYLWQDARLRALDARTGLERWSYPIGDAASCGGVPVRVTPATDGYVYVAAGTRVLAVETGSGPVRWHFEAPAVFLSPPAFAPGPAVTGGGVYLADYLGTVYALDATTGKDRWRIATEARSSIEPVLVAVGNVHVGSGSALYTLDAVTDTPKWRFAAGGDVVGAPWWRRPGPLRLGGPRALHPGRGGRPAALKLATGGEITGSPVAQAGVVYACSKDRCVYALDALKGTGTGNRART</sequence>
<comment type="function">
    <text>Component of the AfsK/AfsR system involved in the response of aerial mycelium formation to glucose.</text>
</comment>
<comment type="catalytic activity">
    <reaction>
        <text>L-seryl-[protein] + ATP = O-phospho-L-seryl-[protein] + ADP + H(+)</text>
        <dbReference type="Rhea" id="RHEA:17989"/>
        <dbReference type="Rhea" id="RHEA-COMP:9863"/>
        <dbReference type="Rhea" id="RHEA-COMP:11604"/>
        <dbReference type="ChEBI" id="CHEBI:15378"/>
        <dbReference type="ChEBI" id="CHEBI:29999"/>
        <dbReference type="ChEBI" id="CHEBI:30616"/>
        <dbReference type="ChEBI" id="CHEBI:83421"/>
        <dbReference type="ChEBI" id="CHEBI:456216"/>
        <dbReference type="EC" id="2.7.11.1"/>
    </reaction>
</comment>
<comment type="catalytic activity">
    <reaction>
        <text>L-threonyl-[protein] + ATP = O-phospho-L-threonyl-[protein] + ADP + H(+)</text>
        <dbReference type="Rhea" id="RHEA:46608"/>
        <dbReference type="Rhea" id="RHEA-COMP:11060"/>
        <dbReference type="Rhea" id="RHEA-COMP:11605"/>
        <dbReference type="ChEBI" id="CHEBI:15378"/>
        <dbReference type="ChEBI" id="CHEBI:30013"/>
        <dbReference type="ChEBI" id="CHEBI:30616"/>
        <dbReference type="ChEBI" id="CHEBI:61977"/>
        <dbReference type="ChEBI" id="CHEBI:456216"/>
        <dbReference type="EC" id="2.7.11.1"/>
    </reaction>
</comment>
<comment type="subunit">
    <text evidence="1">Interacts (via the N-terminal kinase domain) with KbpA; the interaction prevents autophosphorylation of AfsK.</text>
</comment>
<comment type="PTM">
    <text evidence="1">Autophosphorylated mainly on threonine residues. Some phosphorylation on serine residues. Autophosphorylation on Thr-168 is the major site enhancing kinase activity towards AfsR, and is regulated though interaction with KbpA (By similarity).</text>
</comment>
<comment type="similarity">
    <text evidence="2">Belongs to the protein kinase superfamily. Ser/Thr protein kinase family.</text>
</comment>
<reference key="1">
    <citation type="journal article" date="1996" name="Gene">
        <title>The aerial mycelium-defective phenotype of Streptomyces griseus resulting from A-factor deficiency is suppressed by a Ser/Thr kinase of S. coelicolor A3(2).</title>
        <authorList>
            <person name="Ueda K."/>
            <person name="Umeyama T."/>
            <person name="Beppu T."/>
            <person name="Horinouchi S."/>
        </authorList>
    </citation>
    <scope>NUCLEOTIDE SEQUENCE [GENOMIC DNA]</scope>
</reference>
<accession>P54742</accession>
<protein>
    <recommendedName>
        <fullName>Serine/threonine-protein kinase AfsK</fullName>
        <ecNumber>2.7.11.1</ecNumber>
    </recommendedName>
</protein>
<feature type="chain" id="PRO_0000171235" description="Serine/threonine-protein kinase AfsK">
    <location>
        <begin position="1"/>
        <end position="807"/>
    </location>
</feature>
<feature type="domain" description="Protein kinase" evidence="2">
    <location>
        <begin position="16"/>
        <end position="272"/>
    </location>
</feature>
<feature type="region of interest" description="Disordered" evidence="4">
    <location>
        <begin position="292"/>
        <end position="328"/>
    </location>
</feature>
<feature type="region of interest" description="Disordered" evidence="4">
    <location>
        <begin position="353"/>
        <end position="429"/>
    </location>
</feature>
<feature type="compositionally biased region" description="Basic residues" evidence="4">
    <location>
        <begin position="297"/>
        <end position="315"/>
    </location>
</feature>
<feature type="compositionally biased region" description="Low complexity" evidence="4">
    <location>
        <begin position="353"/>
        <end position="363"/>
    </location>
</feature>
<feature type="active site" description="Proton acceptor" evidence="2 3">
    <location>
        <position position="138"/>
    </location>
</feature>
<feature type="binding site" evidence="2">
    <location>
        <begin position="22"/>
        <end position="30"/>
    </location>
    <ligand>
        <name>ATP</name>
        <dbReference type="ChEBI" id="CHEBI:30616"/>
    </ligand>
</feature>
<feature type="binding site" evidence="2">
    <location>
        <position position="44"/>
    </location>
    <ligand>
        <name>ATP</name>
        <dbReference type="ChEBI" id="CHEBI:30616"/>
    </ligand>
</feature>
<feature type="modified residue" description="Phosphoserine; by autocatalysis" evidence="1">
    <location>
        <position position="71"/>
    </location>
</feature>
<feature type="modified residue" description="Phosphothreonine; by autocatalysis" evidence="1">
    <location>
        <position position="168"/>
    </location>
</feature>
<name>AFSK_STRGR</name>
<evidence type="ECO:0000250" key="1"/>
<evidence type="ECO:0000255" key="2">
    <source>
        <dbReference type="PROSITE-ProRule" id="PRU00159"/>
    </source>
</evidence>
<evidence type="ECO:0000255" key="3">
    <source>
        <dbReference type="PROSITE-ProRule" id="PRU10027"/>
    </source>
</evidence>
<evidence type="ECO:0000256" key="4">
    <source>
        <dbReference type="SAM" id="MobiDB-lite"/>
    </source>
</evidence>
<proteinExistence type="inferred from homology"/>
<organism>
    <name type="scientific">Streptomyces griseus</name>
    <dbReference type="NCBI Taxonomy" id="1911"/>
    <lineage>
        <taxon>Bacteria</taxon>
        <taxon>Bacillati</taxon>
        <taxon>Actinomycetota</taxon>
        <taxon>Actinomycetes</taxon>
        <taxon>Kitasatosporales</taxon>
        <taxon>Streptomycetaceae</taxon>
        <taxon>Streptomyces</taxon>
    </lineage>
</organism>
<dbReference type="EC" id="2.7.11.1"/>
<dbReference type="EMBL" id="D45246">
    <property type="protein sequence ID" value="BAA08203.1"/>
    <property type="molecule type" value="Genomic_DNA"/>
</dbReference>
<dbReference type="SMR" id="P54742"/>
<dbReference type="STRING" id="1911.GCA_001715295_02421"/>
<dbReference type="GO" id="GO:0005737">
    <property type="term" value="C:cytoplasm"/>
    <property type="evidence" value="ECO:0007669"/>
    <property type="project" value="UniProtKB-ARBA"/>
</dbReference>
<dbReference type="GO" id="GO:0005524">
    <property type="term" value="F:ATP binding"/>
    <property type="evidence" value="ECO:0007669"/>
    <property type="project" value="UniProtKB-KW"/>
</dbReference>
<dbReference type="GO" id="GO:0106310">
    <property type="term" value="F:protein serine kinase activity"/>
    <property type="evidence" value="ECO:0007669"/>
    <property type="project" value="RHEA"/>
</dbReference>
<dbReference type="GO" id="GO:0004674">
    <property type="term" value="F:protein serine/threonine kinase activity"/>
    <property type="evidence" value="ECO:0007669"/>
    <property type="project" value="UniProtKB-KW"/>
</dbReference>
<dbReference type="CDD" id="cd14014">
    <property type="entry name" value="STKc_PknB_like"/>
    <property type="match status" value="1"/>
</dbReference>
<dbReference type="FunFam" id="1.10.510.10:FF:000021">
    <property type="entry name" value="Serine/threonine protein kinase"/>
    <property type="match status" value="1"/>
</dbReference>
<dbReference type="FunFam" id="3.30.200.20:FF:000267">
    <property type="entry name" value="Serine/threonine protein kinase"/>
    <property type="match status" value="1"/>
</dbReference>
<dbReference type="Gene3D" id="2.40.10.480">
    <property type="match status" value="1"/>
</dbReference>
<dbReference type="Gene3D" id="2.40.128.630">
    <property type="match status" value="1"/>
</dbReference>
<dbReference type="Gene3D" id="3.30.200.20">
    <property type="entry name" value="Phosphorylase Kinase, domain 1"/>
    <property type="match status" value="1"/>
</dbReference>
<dbReference type="Gene3D" id="1.10.510.10">
    <property type="entry name" value="Transferase(Phosphotransferase) domain 1"/>
    <property type="match status" value="1"/>
</dbReference>
<dbReference type="Gene3D" id="2.130.10.10">
    <property type="entry name" value="YVTN repeat-like/Quinoprotein amine dehydrogenase"/>
    <property type="match status" value="1"/>
</dbReference>
<dbReference type="InterPro" id="IPR011009">
    <property type="entry name" value="Kinase-like_dom_sf"/>
</dbReference>
<dbReference type="InterPro" id="IPR018391">
    <property type="entry name" value="PQQ_b-propeller_rpt"/>
</dbReference>
<dbReference type="InterPro" id="IPR002372">
    <property type="entry name" value="PQQ_rpt_dom"/>
</dbReference>
<dbReference type="InterPro" id="IPR000719">
    <property type="entry name" value="Prot_kinase_dom"/>
</dbReference>
<dbReference type="InterPro" id="IPR017441">
    <property type="entry name" value="Protein_kinase_ATP_BS"/>
</dbReference>
<dbReference type="InterPro" id="IPR011047">
    <property type="entry name" value="Quinoprotein_ADH-like_sf"/>
</dbReference>
<dbReference type="InterPro" id="IPR008271">
    <property type="entry name" value="Ser/Thr_kinase_AS"/>
</dbReference>
<dbReference type="InterPro" id="IPR015943">
    <property type="entry name" value="WD40/YVTN_repeat-like_dom_sf"/>
</dbReference>
<dbReference type="PANTHER" id="PTHR22983">
    <property type="entry name" value="PROTEIN KINASE RELATED"/>
    <property type="match status" value="1"/>
</dbReference>
<dbReference type="PANTHER" id="PTHR22983:SF6">
    <property type="entry name" value="SERINE_THREONINE-PROTEIN KINASE 36"/>
    <property type="match status" value="1"/>
</dbReference>
<dbReference type="Pfam" id="PF00069">
    <property type="entry name" value="Pkinase"/>
    <property type="match status" value="1"/>
</dbReference>
<dbReference type="Pfam" id="PF13360">
    <property type="entry name" value="PQQ_2"/>
    <property type="match status" value="1"/>
</dbReference>
<dbReference type="SMART" id="SM00564">
    <property type="entry name" value="PQQ"/>
    <property type="match status" value="8"/>
</dbReference>
<dbReference type="SMART" id="SM00220">
    <property type="entry name" value="S_TKc"/>
    <property type="match status" value="1"/>
</dbReference>
<dbReference type="SUPFAM" id="SSF56112">
    <property type="entry name" value="Protein kinase-like (PK-like)"/>
    <property type="match status" value="1"/>
</dbReference>
<dbReference type="SUPFAM" id="SSF50998">
    <property type="entry name" value="Quinoprotein alcohol dehydrogenase-like"/>
    <property type="match status" value="1"/>
</dbReference>
<dbReference type="PROSITE" id="PS00107">
    <property type="entry name" value="PROTEIN_KINASE_ATP"/>
    <property type="match status" value="1"/>
</dbReference>
<dbReference type="PROSITE" id="PS50011">
    <property type="entry name" value="PROTEIN_KINASE_DOM"/>
    <property type="match status" value="1"/>
</dbReference>
<dbReference type="PROSITE" id="PS00108">
    <property type="entry name" value="PROTEIN_KINASE_ST"/>
    <property type="match status" value="1"/>
</dbReference>